<sequence>MDTKNTEIKGKERYKAGVLKYAQMGYWDGDYQPKDTDVLALFRITPQEGVDPIEAAAAVAGESSTATWTVVWTDRLTACDSYRAKAYKVEPVPGTPGQYFCYVAYDLILFEEGSIANLTASIIGNVFSFKPLKAARLEDMRFPVAYVKTYKGPPTGIIVERERLDKFGKPLLGATTKPKLGLSGKNYGRVVYEGLKGGLDFMKDDENINSQPFMHWRDRFLYVMEAVNLASAQTGEVKGHYLNITAGTMEEMYRRAEFAKSLGSVIVMVDLIIGYTAIQSISEWCRQNDMILHMHRAGHGTYTRQKNHGISFRVIAKWLRLAGVDHLHCGTAVGKLEGDPPTVQGYYNVCREPFNTVDLQRGLFFEQDWADLKKVMPVASGGIHAGQMHQLLSLFGDDVVLQFGGGTIGHPMGIQAGATANRVALEAMVLARNEGRNIDVEGPEILRAAAKWCKPLEAALDTWGNITFNYTSTDTSDFVPTPSVSM</sequence>
<protein>
    <recommendedName>
        <fullName evidence="1">Ribulose bisphosphate carboxylase large chain 1</fullName>
        <shortName evidence="1">RuBisCO large subunit 1</shortName>
        <ecNumber evidence="1">4.1.1.39</ecNumber>
    </recommendedName>
</protein>
<dbReference type="EC" id="4.1.1.39" evidence="1"/>
<dbReference type="EMBL" id="CP000661">
    <property type="protein sequence ID" value="ABP71599.1"/>
    <property type="molecule type" value="Genomic_DNA"/>
</dbReference>
<dbReference type="SMR" id="A4WW35"/>
<dbReference type="STRING" id="349102.Rsph17025_2712"/>
<dbReference type="KEGG" id="rsq:Rsph17025_2712"/>
<dbReference type="eggNOG" id="COG1850">
    <property type="taxonomic scope" value="Bacteria"/>
</dbReference>
<dbReference type="HOGENOM" id="CLU_031450_2_0_5"/>
<dbReference type="BioCyc" id="RSPH349102:G1G8M-2792-MONOMER"/>
<dbReference type="GO" id="GO:0000287">
    <property type="term" value="F:magnesium ion binding"/>
    <property type="evidence" value="ECO:0007669"/>
    <property type="project" value="UniProtKB-UniRule"/>
</dbReference>
<dbReference type="GO" id="GO:0004497">
    <property type="term" value="F:monooxygenase activity"/>
    <property type="evidence" value="ECO:0007669"/>
    <property type="project" value="UniProtKB-KW"/>
</dbReference>
<dbReference type="GO" id="GO:0016984">
    <property type="term" value="F:ribulose-bisphosphate carboxylase activity"/>
    <property type="evidence" value="ECO:0007669"/>
    <property type="project" value="UniProtKB-UniRule"/>
</dbReference>
<dbReference type="GO" id="GO:0019253">
    <property type="term" value="P:reductive pentose-phosphate cycle"/>
    <property type="evidence" value="ECO:0007669"/>
    <property type="project" value="UniProtKB-UniRule"/>
</dbReference>
<dbReference type="CDD" id="cd08212">
    <property type="entry name" value="RuBisCO_large_I"/>
    <property type="match status" value="1"/>
</dbReference>
<dbReference type="Gene3D" id="3.20.20.110">
    <property type="entry name" value="Ribulose bisphosphate carboxylase, large subunit, C-terminal domain"/>
    <property type="match status" value="1"/>
</dbReference>
<dbReference type="Gene3D" id="3.30.70.150">
    <property type="entry name" value="RuBisCO large subunit, N-terminal domain"/>
    <property type="match status" value="1"/>
</dbReference>
<dbReference type="HAMAP" id="MF_01338">
    <property type="entry name" value="RuBisCO_L_type1"/>
    <property type="match status" value="1"/>
</dbReference>
<dbReference type="InterPro" id="IPR033966">
    <property type="entry name" value="RuBisCO"/>
</dbReference>
<dbReference type="InterPro" id="IPR020878">
    <property type="entry name" value="RuBisCo_large_chain_AS"/>
</dbReference>
<dbReference type="InterPro" id="IPR000685">
    <property type="entry name" value="RuBisCO_lsu_C"/>
</dbReference>
<dbReference type="InterPro" id="IPR036376">
    <property type="entry name" value="RuBisCO_lsu_C_sf"/>
</dbReference>
<dbReference type="InterPro" id="IPR017443">
    <property type="entry name" value="RuBisCO_lsu_fd_N"/>
</dbReference>
<dbReference type="InterPro" id="IPR036422">
    <property type="entry name" value="RuBisCO_lsu_N_sf"/>
</dbReference>
<dbReference type="InterPro" id="IPR020888">
    <property type="entry name" value="RuBisCO_lsuI"/>
</dbReference>
<dbReference type="NCBIfam" id="NF003252">
    <property type="entry name" value="PRK04208.1"/>
    <property type="match status" value="1"/>
</dbReference>
<dbReference type="PANTHER" id="PTHR42704">
    <property type="entry name" value="RIBULOSE BISPHOSPHATE CARBOXYLASE"/>
    <property type="match status" value="1"/>
</dbReference>
<dbReference type="PANTHER" id="PTHR42704:SF17">
    <property type="entry name" value="RIBULOSE BISPHOSPHATE CARBOXYLASE LARGE CHAIN"/>
    <property type="match status" value="1"/>
</dbReference>
<dbReference type="Pfam" id="PF00016">
    <property type="entry name" value="RuBisCO_large"/>
    <property type="match status" value="1"/>
</dbReference>
<dbReference type="Pfam" id="PF02788">
    <property type="entry name" value="RuBisCO_large_N"/>
    <property type="match status" value="1"/>
</dbReference>
<dbReference type="SFLD" id="SFLDG01052">
    <property type="entry name" value="RuBisCO"/>
    <property type="match status" value="1"/>
</dbReference>
<dbReference type="SFLD" id="SFLDS00014">
    <property type="entry name" value="RuBisCO"/>
    <property type="match status" value="1"/>
</dbReference>
<dbReference type="SFLD" id="SFLDG00301">
    <property type="entry name" value="RuBisCO-like_proteins"/>
    <property type="match status" value="1"/>
</dbReference>
<dbReference type="SUPFAM" id="SSF51649">
    <property type="entry name" value="RuBisCo, C-terminal domain"/>
    <property type="match status" value="1"/>
</dbReference>
<dbReference type="SUPFAM" id="SSF54966">
    <property type="entry name" value="RuBisCO, large subunit, small (N-terminal) domain"/>
    <property type="match status" value="1"/>
</dbReference>
<dbReference type="PROSITE" id="PS00157">
    <property type="entry name" value="RUBISCO_LARGE"/>
    <property type="match status" value="1"/>
</dbReference>
<name>RBL1_CERS5</name>
<organism>
    <name type="scientific">Cereibacter sphaeroides (strain ATCC 17025 / ATH 2.4.3)</name>
    <name type="common">Rhodobacter sphaeroides</name>
    <dbReference type="NCBI Taxonomy" id="349102"/>
    <lineage>
        <taxon>Bacteria</taxon>
        <taxon>Pseudomonadati</taxon>
        <taxon>Pseudomonadota</taxon>
        <taxon>Alphaproteobacteria</taxon>
        <taxon>Rhodobacterales</taxon>
        <taxon>Paracoccaceae</taxon>
        <taxon>Cereibacter</taxon>
    </lineage>
</organism>
<keyword id="KW-0113">Calvin cycle</keyword>
<keyword id="KW-0120">Carbon dioxide fixation</keyword>
<keyword id="KW-0456">Lyase</keyword>
<keyword id="KW-0460">Magnesium</keyword>
<keyword id="KW-0479">Metal-binding</keyword>
<keyword id="KW-0503">Monooxygenase</keyword>
<keyword id="KW-0560">Oxidoreductase</keyword>
<keyword id="KW-0602">Photosynthesis</keyword>
<accession>A4WW35</accession>
<proteinExistence type="inferred from homology"/>
<gene>
    <name evidence="1" type="primary">cbbL1</name>
    <name type="ordered locus">Rsph17025_2712</name>
</gene>
<reference key="1">
    <citation type="submission" date="2007-04" db="EMBL/GenBank/DDBJ databases">
        <title>Complete sequence of chromosome of Rhodobacter sphaeroides ATCC 17025.</title>
        <authorList>
            <consortium name="US DOE Joint Genome Institute"/>
            <person name="Copeland A."/>
            <person name="Lucas S."/>
            <person name="Lapidus A."/>
            <person name="Barry K."/>
            <person name="Detter J.C."/>
            <person name="Glavina del Rio T."/>
            <person name="Hammon N."/>
            <person name="Israni S."/>
            <person name="Dalin E."/>
            <person name="Tice H."/>
            <person name="Pitluck S."/>
            <person name="Chertkov O."/>
            <person name="Brettin T."/>
            <person name="Bruce D."/>
            <person name="Han C."/>
            <person name="Schmutz J."/>
            <person name="Larimer F."/>
            <person name="Land M."/>
            <person name="Hauser L."/>
            <person name="Kyrpides N."/>
            <person name="Kim E."/>
            <person name="Richardson P."/>
            <person name="Mackenzie C."/>
            <person name="Choudhary M."/>
            <person name="Donohue T.J."/>
            <person name="Kaplan S."/>
        </authorList>
    </citation>
    <scope>NUCLEOTIDE SEQUENCE [LARGE SCALE GENOMIC DNA]</scope>
    <source>
        <strain>ATCC 17025 / ATH 2.4.3</strain>
    </source>
</reference>
<feature type="chain" id="PRO_0000355752" description="Ribulose bisphosphate carboxylase large chain 1">
    <location>
        <begin position="1"/>
        <end position="486"/>
    </location>
</feature>
<feature type="active site" description="Proton acceptor" evidence="1">
    <location>
        <position position="177"/>
    </location>
</feature>
<feature type="active site" description="Proton acceptor" evidence="1">
    <location>
        <position position="295"/>
    </location>
</feature>
<feature type="binding site" description="in homodimeric partner" evidence="1">
    <location>
        <position position="125"/>
    </location>
    <ligand>
        <name>substrate</name>
    </ligand>
</feature>
<feature type="binding site" evidence="1">
    <location>
        <position position="175"/>
    </location>
    <ligand>
        <name>substrate</name>
    </ligand>
</feature>
<feature type="binding site" evidence="1">
    <location>
        <position position="179"/>
    </location>
    <ligand>
        <name>substrate</name>
    </ligand>
</feature>
<feature type="binding site" description="via carbamate group" evidence="1">
    <location>
        <position position="203"/>
    </location>
    <ligand>
        <name>Mg(2+)</name>
        <dbReference type="ChEBI" id="CHEBI:18420"/>
    </ligand>
</feature>
<feature type="binding site" evidence="1">
    <location>
        <position position="205"/>
    </location>
    <ligand>
        <name>Mg(2+)</name>
        <dbReference type="ChEBI" id="CHEBI:18420"/>
    </ligand>
</feature>
<feature type="binding site" evidence="1">
    <location>
        <position position="206"/>
    </location>
    <ligand>
        <name>Mg(2+)</name>
        <dbReference type="ChEBI" id="CHEBI:18420"/>
    </ligand>
</feature>
<feature type="binding site" evidence="1">
    <location>
        <position position="296"/>
    </location>
    <ligand>
        <name>substrate</name>
    </ligand>
</feature>
<feature type="binding site" evidence="1">
    <location>
        <position position="328"/>
    </location>
    <ligand>
        <name>substrate</name>
    </ligand>
</feature>
<feature type="binding site" evidence="1">
    <location>
        <position position="380"/>
    </location>
    <ligand>
        <name>substrate</name>
    </ligand>
</feature>
<feature type="site" description="Transition state stabilizer" evidence="1">
    <location>
        <position position="335"/>
    </location>
</feature>
<feature type="modified residue" description="N6-carboxylysine" evidence="1">
    <location>
        <position position="203"/>
    </location>
</feature>
<evidence type="ECO:0000255" key="1">
    <source>
        <dbReference type="HAMAP-Rule" id="MF_01338"/>
    </source>
</evidence>
<comment type="function">
    <text evidence="1">RuBisCO catalyzes two reactions: the carboxylation of D-ribulose 1,5-bisphosphate, the primary event in carbon dioxide fixation, as well as the oxidative fragmentation of the pentose substrate. Both reactions occur simultaneously and in competition at the same active site.</text>
</comment>
<comment type="catalytic activity">
    <reaction evidence="1">
        <text>2 (2R)-3-phosphoglycerate + 2 H(+) = D-ribulose 1,5-bisphosphate + CO2 + H2O</text>
        <dbReference type="Rhea" id="RHEA:23124"/>
        <dbReference type="ChEBI" id="CHEBI:15377"/>
        <dbReference type="ChEBI" id="CHEBI:15378"/>
        <dbReference type="ChEBI" id="CHEBI:16526"/>
        <dbReference type="ChEBI" id="CHEBI:57870"/>
        <dbReference type="ChEBI" id="CHEBI:58272"/>
        <dbReference type="EC" id="4.1.1.39"/>
    </reaction>
</comment>
<comment type="catalytic activity">
    <reaction evidence="1">
        <text>D-ribulose 1,5-bisphosphate + O2 = 2-phosphoglycolate + (2R)-3-phosphoglycerate + 2 H(+)</text>
        <dbReference type="Rhea" id="RHEA:36631"/>
        <dbReference type="ChEBI" id="CHEBI:15378"/>
        <dbReference type="ChEBI" id="CHEBI:15379"/>
        <dbReference type="ChEBI" id="CHEBI:57870"/>
        <dbReference type="ChEBI" id="CHEBI:58033"/>
        <dbReference type="ChEBI" id="CHEBI:58272"/>
    </reaction>
</comment>
<comment type="cofactor">
    <cofactor evidence="1">
        <name>Mg(2+)</name>
        <dbReference type="ChEBI" id="CHEBI:18420"/>
    </cofactor>
    <text evidence="1">Binds 1 Mg(2+) ion per subunit.</text>
</comment>
<comment type="subunit">
    <text evidence="1">Heterohexadecamer of 8 large chains and 8 small chains.</text>
</comment>
<comment type="miscellaneous">
    <text evidence="1">The basic functional RuBisCO is composed of a large chain homodimer in a 'head-to-tail' conformation. In form I RuBisCO this homodimer is arranged in a barrel-like tetramer with the small subunits forming a tetrameric 'cap' on each end of the 'barrel'.</text>
</comment>
<comment type="similarity">
    <text evidence="1">Belongs to the RuBisCO large chain family. Type I subfamily.</text>
</comment>